<accession>Q7UQA5</accession>
<protein>
    <recommendedName>
        <fullName evidence="1">Holo-[acyl-carrier-protein] synthase</fullName>
        <shortName evidence="1">Holo-ACP synthase</shortName>
        <ecNumber evidence="1">2.7.8.7</ecNumber>
    </recommendedName>
    <alternativeName>
        <fullName evidence="1">4'-phosphopantetheinyl transferase AcpS</fullName>
    </alternativeName>
</protein>
<dbReference type="EC" id="2.7.8.7" evidence="1"/>
<dbReference type="EMBL" id="BX294144">
    <property type="protein sequence ID" value="CAD74800.1"/>
    <property type="molecule type" value="Genomic_DNA"/>
</dbReference>
<dbReference type="RefSeq" id="NP_867254.1">
    <property type="nucleotide sequence ID" value="NC_005027.1"/>
</dbReference>
<dbReference type="RefSeq" id="WP_007324752.1">
    <property type="nucleotide sequence ID" value="NC_005027.1"/>
</dbReference>
<dbReference type="SMR" id="Q7UQA5"/>
<dbReference type="FunCoup" id="Q7UQA5">
    <property type="interactions" value="132"/>
</dbReference>
<dbReference type="STRING" id="243090.RB6435"/>
<dbReference type="EnsemblBacteria" id="CAD74800">
    <property type="protein sequence ID" value="CAD74800"/>
    <property type="gene ID" value="RB6435"/>
</dbReference>
<dbReference type="KEGG" id="rba:RB6435"/>
<dbReference type="PATRIC" id="fig|243090.15.peg.3111"/>
<dbReference type="eggNOG" id="COG0736">
    <property type="taxonomic scope" value="Bacteria"/>
</dbReference>
<dbReference type="HOGENOM" id="CLU_089696_0_2_0"/>
<dbReference type="InParanoid" id="Q7UQA5"/>
<dbReference type="OrthoDB" id="517356at2"/>
<dbReference type="Proteomes" id="UP000001025">
    <property type="component" value="Chromosome"/>
</dbReference>
<dbReference type="GO" id="GO:0005737">
    <property type="term" value="C:cytoplasm"/>
    <property type="evidence" value="ECO:0007669"/>
    <property type="project" value="UniProtKB-SubCell"/>
</dbReference>
<dbReference type="GO" id="GO:0008897">
    <property type="term" value="F:holo-[acyl-carrier-protein] synthase activity"/>
    <property type="evidence" value="ECO:0007669"/>
    <property type="project" value="UniProtKB-UniRule"/>
</dbReference>
<dbReference type="GO" id="GO:0000287">
    <property type="term" value="F:magnesium ion binding"/>
    <property type="evidence" value="ECO:0007669"/>
    <property type="project" value="UniProtKB-UniRule"/>
</dbReference>
<dbReference type="GO" id="GO:0006633">
    <property type="term" value="P:fatty acid biosynthetic process"/>
    <property type="evidence" value="ECO:0007669"/>
    <property type="project" value="UniProtKB-UniRule"/>
</dbReference>
<dbReference type="Gene3D" id="3.90.470.20">
    <property type="entry name" value="4'-phosphopantetheinyl transferase domain"/>
    <property type="match status" value="1"/>
</dbReference>
<dbReference type="HAMAP" id="MF_00101">
    <property type="entry name" value="AcpS"/>
    <property type="match status" value="1"/>
</dbReference>
<dbReference type="InterPro" id="IPR008278">
    <property type="entry name" value="4-PPantetheinyl_Trfase_dom"/>
</dbReference>
<dbReference type="InterPro" id="IPR037143">
    <property type="entry name" value="4-PPantetheinyl_Trfase_dom_sf"/>
</dbReference>
<dbReference type="InterPro" id="IPR002582">
    <property type="entry name" value="ACPS"/>
</dbReference>
<dbReference type="InterPro" id="IPR004568">
    <property type="entry name" value="Ppantetheine-prot_Trfase_dom"/>
</dbReference>
<dbReference type="NCBIfam" id="TIGR00516">
    <property type="entry name" value="acpS"/>
    <property type="match status" value="1"/>
</dbReference>
<dbReference type="NCBIfam" id="TIGR00556">
    <property type="entry name" value="pantethn_trn"/>
    <property type="match status" value="1"/>
</dbReference>
<dbReference type="Pfam" id="PF01648">
    <property type="entry name" value="ACPS"/>
    <property type="match status" value="1"/>
</dbReference>
<dbReference type="SUPFAM" id="SSF56214">
    <property type="entry name" value="4'-phosphopantetheinyl transferase"/>
    <property type="match status" value="1"/>
</dbReference>
<evidence type="ECO:0000255" key="1">
    <source>
        <dbReference type="HAMAP-Rule" id="MF_00101"/>
    </source>
</evidence>
<organism>
    <name type="scientific">Rhodopirellula baltica (strain DSM 10527 / NCIMB 13988 / SH1)</name>
    <dbReference type="NCBI Taxonomy" id="243090"/>
    <lineage>
        <taxon>Bacteria</taxon>
        <taxon>Pseudomonadati</taxon>
        <taxon>Planctomycetota</taxon>
        <taxon>Planctomycetia</taxon>
        <taxon>Pirellulales</taxon>
        <taxon>Pirellulaceae</taxon>
        <taxon>Rhodopirellula</taxon>
    </lineage>
</organism>
<proteinExistence type="inferred from homology"/>
<reference key="1">
    <citation type="journal article" date="2003" name="Proc. Natl. Acad. Sci. U.S.A.">
        <title>Complete genome sequence of the marine planctomycete Pirellula sp. strain 1.</title>
        <authorList>
            <person name="Gloeckner F.O."/>
            <person name="Kube M."/>
            <person name="Bauer M."/>
            <person name="Teeling H."/>
            <person name="Lombardot T."/>
            <person name="Ludwig W."/>
            <person name="Gade D."/>
            <person name="Beck A."/>
            <person name="Borzym K."/>
            <person name="Heitmann K."/>
            <person name="Rabus R."/>
            <person name="Schlesner H."/>
            <person name="Amann R."/>
            <person name="Reinhardt R."/>
        </authorList>
    </citation>
    <scope>NUCLEOTIDE SEQUENCE [LARGE SCALE GENOMIC DNA]</scope>
    <source>
        <strain>DSM 10527 / NCIMB 13988 / SH1</strain>
    </source>
</reference>
<name>ACPS_RHOBA</name>
<keyword id="KW-0963">Cytoplasm</keyword>
<keyword id="KW-0275">Fatty acid biosynthesis</keyword>
<keyword id="KW-0276">Fatty acid metabolism</keyword>
<keyword id="KW-0444">Lipid biosynthesis</keyword>
<keyword id="KW-0443">Lipid metabolism</keyword>
<keyword id="KW-0460">Magnesium</keyword>
<keyword id="KW-0479">Metal-binding</keyword>
<keyword id="KW-1185">Reference proteome</keyword>
<keyword id="KW-0808">Transferase</keyword>
<feature type="chain" id="PRO_0000175690" description="Holo-[acyl-carrier-protein] synthase">
    <location>
        <begin position="1"/>
        <end position="125"/>
    </location>
</feature>
<feature type="binding site" evidence="1">
    <location>
        <position position="9"/>
    </location>
    <ligand>
        <name>Mg(2+)</name>
        <dbReference type="ChEBI" id="CHEBI:18420"/>
    </ligand>
</feature>
<feature type="binding site" evidence="1">
    <location>
        <position position="58"/>
    </location>
    <ligand>
        <name>Mg(2+)</name>
        <dbReference type="ChEBI" id="CHEBI:18420"/>
    </ligand>
</feature>
<sequence>MAIVAVGTEIVQCARIAQMIQQHGEQFLERVFTAAEIDHCAQRPDATGHFSRRWAAKQAVFKALRCHRRGVSWTDIEIATHPSEGPTIELHGIAADLAEEAEIDAIHLSLGGCRTQAIAYVVLCD</sequence>
<gene>
    <name evidence="1" type="primary">acpS</name>
    <name type="ordered locus">RB6435</name>
</gene>
<comment type="function">
    <text evidence="1">Transfers the 4'-phosphopantetheine moiety from coenzyme A to a Ser of acyl-carrier-protein.</text>
</comment>
<comment type="catalytic activity">
    <reaction evidence="1">
        <text>apo-[ACP] + CoA = holo-[ACP] + adenosine 3',5'-bisphosphate + H(+)</text>
        <dbReference type="Rhea" id="RHEA:12068"/>
        <dbReference type="Rhea" id="RHEA-COMP:9685"/>
        <dbReference type="Rhea" id="RHEA-COMP:9690"/>
        <dbReference type="ChEBI" id="CHEBI:15378"/>
        <dbReference type="ChEBI" id="CHEBI:29999"/>
        <dbReference type="ChEBI" id="CHEBI:57287"/>
        <dbReference type="ChEBI" id="CHEBI:58343"/>
        <dbReference type="ChEBI" id="CHEBI:64479"/>
        <dbReference type="EC" id="2.7.8.7"/>
    </reaction>
</comment>
<comment type="cofactor">
    <cofactor evidence="1">
        <name>Mg(2+)</name>
        <dbReference type="ChEBI" id="CHEBI:18420"/>
    </cofactor>
</comment>
<comment type="subcellular location">
    <subcellularLocation>
        <location evidence="1">Cytoplasm</location>
    </subcellularLocation>
</comment>
<comment type="similarity">
    <text evidence="1">Belongs to the P-Pant transferase superfamily. AcpS family.</text>
</comment>